<feature type="chain" id="PRO_0000302576" description="Acyl-[acyl-carrier-protein]--UDP-N-acetylglucosamine O-acyltransferase">
    <location>
        <begin position="1"/>
        <end position="262"/>
    </location>
</feature>
<protein>
    <recommendedName>
        <fullName evidence="1">Acyl-[acyl-carrier-protein]--UDP-N-acetylglucosamine O-acyltransferase</fullName>
        <shortName evidence="1">UDP-N-acetylglucosamine acyltransferase</shortName>
        <ecNumber evidence="1">2.3.1.129</ecNumber>
    </recommendedName>
</protein>
<keyword id="KW-0012">Acyltransferase</keyword>
<keyword id="KW-0963">Cytoplasm</keyword>
<keyword id="KW-0441">Lipid A biosynthesis</keyword>
<keyword id="KW-0444">Lipid biosynthesis</keyword>
<keyword id="KW-0443">Lipid metabolism</keyword>
<keyword id="KW-0677">Repeat</keyword>
<keyword id="KW-0808">Transferase</keyword>
<evidence type="ECO:0000255" key="1">
    <source>
        <dbReference type="HAMAP-Rule" id="MF_00387"/>
    </source>
</evidence>
<sequence length="262" mass="28458">MIHSTAKIHPSSIIEEGAKIGENVVIGPFCIVGSDVQIGKGTTLHSHVVVKGVTTIGEDNQIFQFASIGEVNQDLKYQGEPTKTIIGHRNRIRESVTIHRGTVQGGGVTRIGDDNLLMINAHIAHDCQIGNRCILANNATLAGHVELGDFVIVGGMSAIHQFVIVGAHVMLGGGSMVSQDVPPYVMAQGNHARPFGVNIEGLKRRGFDKPTLHAIRNVYKLIYRSGKTLEEVIPEIENYAQTESAVSFFLDFFNRSTRGIIR</sequence>
<accession>Q0I4M4</accession>
<name>LPXA_HISS1</name>
<organism>
    <name type="scientific">Histophilus somni (strain 129Pt)</name>
    <name type="common">Haemophilus somnus</name>
    <dbReference type="NCBI Taxonomy" id="205914"/>
    <lineage>
        <taxon>Bacteria</taxon>
        <taxon>Pseudomonadati</taxon>
        <taxon>Pseudomonadota</taxon>
        <taxon>Gammaproteobacteria</taxon>
        <taxon>Pasteurellales</taxon>
        <taxon>Pasteurellaceae</taxon>
        <taxon>Histophilus</taxon>
    </lineage>
</organism>
<comment type="function">
    <text evidence="1">Involved in the biosynthesis of lipid A, a phosphorylated glycolipid that anchors the lipopolysaccharide to the outer membrane of the cell.</text>
</comment>
<comment type="catalytic activity">
    <reaction evidence="1">
        <text>a (3R)-hydroxyacyl-[ACP] + UDP-N-acetyl-alpha-D-glucosamine = a UDP-3-O-[(3R)-3-hydroxyacyl]-N-acetyl-alpha-D-glucosamine + holo-[ACP]</text>
        <dbReference type="Rhea" id="RHEA:67812"/>
        <dbReference type="Rhea" id="RHEA-COMP:9685"/>
        <dbReference type="Rhea" id="RHEA-COMP:9945"/>
        <dbReference type="ChEBI" id="CHEBI:57705"/>
        <dbReference type="ChEBI" id="CHEBI:64479"/>
        <dbReference type="ChEBI" id="CHEBI:78827"/>
        <dbReference type="ChEBI" id="CHEBI:173225"/>
        <dbReference type="EC" id="2.3.1.129"/>
    </reaction>
</comment>
<comment type="pathway">
    <text evidence="1">Glycolipid biosynthesis; lipid IV(A) biosynthesis; lipid IV(A) from (3R)-3-hydroxytetradecanoyl-[acyl-carrier-protein] and UDP-N-acetyl-alpha-D-glucosamine: step 1/6.</text>
</comment>
<comment type="subunit">
    <text evidence="1">Homotrimer.</text>
</comment>
<comment type="subcellular location">
    <subcellularLocation>
        <location evidence="1">Cytoplasm</location>
    </subcellularLocation>
</comment>
<comment type="similarity">
    <text evidence="1">Belongs to the transferase hexapeptide repeat family. LpxA subfamily.</text>
</comment>
<reference key="1">
    <citation type="journal article" date="2007" name="J. Bacteriol.">
        <title>Complete genome sequence of Haemophilus somnus (Histophilus somni) strain 129Pt and comparison to Haemophilus ducreyi 35000HP and Haemophilus influenzae Rd.</title>
        <authorList>
            <person name="Challacombe J.F."/>
            <person name="Duncan A.J."/>
            <person name="Brettin T.S."/>
            <person name="Bruce D."/>
            <person name="Chertkov O."/>
            <person name="Detter J.C."/>
            <person name="Han C.S."/>
            <person name="Misra M."/>
            <person name="Richardson P."/>
            <person name="Tapia R."/>
            <person name="Thayer N."/>
            <person name="Xie G."/>
            <person name="Inzana T.J."/>
        </authorList>
    </citation>
    <scope>NUCLEOTIDE SEQUENCE [LARGE SCALE GENOMIC DNA]</scope>
    <source>
        <strain>129Pt</strain>
    </source>
</reference>
<dbReference type="EC" id="2.3.1.129" evidence="1"/>
<dbReference type="EMBL" id="CP000436">
    <property type="protein sequence ID" value="ABI25634.1"/>
    <property type="molecule type" value="Genomic_DNA"/>
</dbReference>
<dbReference type="SMR" id="Q0I4M4"/>
<dbReference type="KEGG" id="hso:HS_1359"/>
<dbReference type="eggNOG" id="COG1043">
    <property type="taxonomic scope" value="Bacteria"/>
</dbReference>
<dbReference type="HOGENOM" id="CLU_061249_0_0_6"/>
<dbReference type="UniPathway" id="UPA00359">
    <property type="reaction ID" value="UER00477"/>
</dbReference>
<dbReference type="GO" id="GO:0005737">
    <property type="term" value="C:cytoplasm"/>
    <property type="evidence" value="ECO:0007669"/>
    <property type="project" value="UniProtKB-SubCell"/>
</dbReference>
<dbReference type="GO" id="GO:0016020">
    <property type="term" value="C:membrane"/>
    <property type="evidence" value="ECO:0007669"/>
    <property type="project" value="GOC"/>
</dbReference>
<dbReference type="GO" id="GO:0008780">
    <property type="term" value="F:acyl-[acyl-carrier-protein]-UDP-N-acetylglucosamine O-acyltransferase activity"/>
    <property type="evidence" value="ECO:0007669"/>
    <property type="project" value="UniProtKB-UniRule"/>
</dbReference>
<dbReference type="GO" id="GO:0009245">
    <property type="term" value="P:lipid A biosynthetic process"/>
    <property type="evidence" value="ECO:0007669"/>
    <property type="project" value="UniProtKB-UniRule"/>
</dbReference>
<dbReference type="CDD" id="cd03351">
    <property type="entry name" value="LbH_UDP-GlcNAc_AT"/>
    <property type="match status" value="1"/>
</dbReference>
<dbReference type="FunFam" id="2.160.10.10:FF:000003">
    <property type="entry name" value="Acyl-[acyl-carrier-protein]--UDP-N-acetylglucosamine O-acyltransferase"/>
    <property type="match status" value="1"/>
</dbReference>
<dbReference type="Gene3D" id="2.160.10.10">
    <property type="entry name" value="Hexapeptide repeat proteins"/>
    <property type="match status" value="1"/>
</dbReference>
<dbReference type="Gene3D" id="1.20.1180.10">
    <property type="entry name" value="Udp N-acetylglucosamine O-acyltransferase, C-terminal domain"/>
    <property type="match status" value="1"/>
</dbReference>
<dbReference type="HAMAP" id="MF_00387">
    <property type="entry name" value="LpxA"/>
    <property type="match status" value="1"/>
</dbReference>
<dbReference type="InterPro" id="IPR029098">
    <property type="entry name" value="Acetyltransf_C"/>
</dbReference>
<dbReference type="InterPro" id="IPR037157">
    <property type="entry name" value="Acetyltransf_C_sf"/>
</dbReference>
<dbReference type="InterPro" id="IPR001451">
    <property type="entry name" value="Hexapep"/>
</dbReference>
<dbReference type="InterPro" id="IPR018357">
    <property type="entry name" value="Hexapep_transf_CS"/>
</dbReference>
<dbReference type="InterPro" id="IPR010137">
    <property type="entry name" value="Lipid_A_LpxA"/>
</dbReference>
<dbReference type="InterPro" id="IPR011004">
    <property type="entry name" value="Trimer_LpxA-like_sf"/>
</dbReference>
<dbReference type="NCBIfam" id="TIGR01852">
    <property type="entry name" value="lipid_A_lpxA"/>
    <property type="match status" value="1"/>
</dbReference>
<dbReference type="NCBIfam" id="NF003657">
    <property type="entry name" value="PRK05289.1"/>
    <property type="match status" value="1"/>
</dbReference>
<dbReference type="PANTHER" id="PTHR43480">
    <property type="entry name" value="ACYL-[ACYL-CARRIER-PROTEIN]--UDP-N-ACETYLGLUCOSAMINE O-ACYLTRANSFERASE"/>
    <property type="match status" value="1"/>
</dbReference>
<dbReference type="PANTHER" id="PTHR43480:SF1">
    <property type="entry name" value="ACYL-[ACYL-CARRIER-PROTEIN]--UDP-N-ACETYLGLUCOSAMINE O-ACYLTRANSFERASE, MITOCHONDRIAL-RELATED"/>
    <property type="match status" value="1"/>
</dbReference>
<dbReference type="Pfam" id="PF13720">
    <property type="entry name" value="Acetyltransf_11"/>
    <property type="match status" value="1"/>
</dbReference>
<dbReference type="Pfam" id="PF00132">
    <property type="entry name" value="Hexapep"/>
    <property type="match status" value="2"/>
</dbReference>
<dbReference type="PIRSF" id="PIRSF000456">
    <property type="entry name" value="UDP-GlcNAc_acltr"/>
    <property type="match status" value="1"/>
</dbReference>
<dbReference type="SUPFAM" id="SSF51161">
    <property type="entry name" value="Trimeric LpxA-like enzymes"/>
    <property type="match status" value="1"/>
</dbReference>
<dbReference type="PROSITE" id="PS00101">
    <property type="entry name" value="HEXAPEP_TRANSFERASES"/>
    <property type="match status" value="3"/>
</dbReference>
<gene>
    <name evidence="1" type="primary">lpxA</name>
    <name type="ordered locus">HS_1359</name>
</gene>
<proteinExistence type="inferred from homology"/>